<gene>
    <name evidence="1" type="primary">nagB</name>
    <name type="ordered locus">SPD_1246</name>
</gene>
<name>NAGB_STRP2</name>
<comment type="function">
    <text evidence="1">Catalyzes the reversible isomerization-deamination of glucosamine 6-phosphate (GlcN6P) to form fructose 6-phosphate (Fru6P) and ammonium ion.</text>
</comment>
<comment type="catalytic activity">
    <reaction evidence="1">
        <text>alpha-D-glucosamine 6-phosphate + H2O = beta-D-fructose 6-phosphate + NH4(+)</text>
        <dbReference type="Rhea" id="RHEA:12172"/>
        <dbReference type="ChEBI" id="CHEBI:15377"/>
        <dbReference type="ChEBI" id="CHEBI:28938"/>
        <dbReference type="ChEBI" id="CHEBI:57634"/>
        <dbReference type="ChEBI" id="CHEBI:75989"/>
        <dbReference type="EC" id="3.5.99.6"/>
    </reaction>
</comment>
<comment type="pathway">
    <text evidence="1">Amino-sugar metabolism; N-acetylneuraminate degradation; D-fructose 6-phosphate from N-acetylneuraminate: step 5/5.</text>
</comment>
<comment type="similarity">
    <text evidence="1">Belongs to the glucosamine/galactosamine-6-phosphate isomerase family. NagB subfamily.</text>
</comment>
<accession>Q04JT5</accession>
<dbReference type="EC" id="3.5.99.6" evidence="1"/>
<dbReference type="EMBL" id="CP000410">
    <property type="protein sequence ID" value="ABJ54518.1"/>
    <property type="molecule type" value="Genomic_DNA"/>
</dbReference>
<dbReference type="RefSeq" id="WP_000864623.1">
    <property type="nucleotide sequence ID" value="NZ_JAMLJR010000005.1"/>
</dbReference>
<dbReference type="SMR" id="Q04JT5"/>
<dbReference type="PaxDb" id="373153-SPD_1246"/>
<dbReference type="KEGG" id="spd:SPD_1246"/>
<dbReference type="eggNOG" id="COG0363">
    <property type="taxonomic scope" value="Bacteria"/>
</dbReference>
<dbReference type="HOGENOM" id="CLU_049611_1_0_9"/>
<dbReference type="BioCyc" id="SPNE373153:G1G6V-1346-MONOMER"/>
<dbReference type="UniPathway" id="UPA00629">
    <property type="reaction ID" value="UER00684"/>
</dbReference>
<dbReference type="Proteomes" id="UP000001452">
    <property type="component" value="Chromosome"/>
</dbReference>
<dbReference type="GO" id="GO:0005737">
    <property type="term" value="C:cytoplasm"/>
    <property type="evidence" value="ECO:0007669"/>
    <property type="project" value="TreeGrafter"/>
</dbReference>
<dbReference type="GO" id="GO:0004342">
    <property type="term" value="F:glucosamine-6-phosphate deaminase activity"/>
    <property type="evidence" value="ECO:0007669"/>
    <property type="project" value="UniProtKB-UniRule"/>
</dbReference>
<dbReference type="GO" id="GO:0042802">
    <property type="term" value="F:identical protein binding"/>
    <property type="evidence" value="ECO:0007669"/>
    <property type="project" value="TreeGrafter"/>
</dbReference>
<dbReference type="GO" id="GO:0005975">
    <property type="term" value="P:carbohydrate metabolic process"/>
    <property type="evidence" value="ECO:0007669"/>
    <property type="project" value="InterPro"/>
</dbReference>
<dbReference type="GO" id="GO:0006043">
    <property type="term" value="P:glucosamine catabolic process"/>
    <property type="evidence" value="ECO:0007669"/>
    <property type="project" value="TreeGrafter"/>
</dbReference>
<dbReference type="GO" id="GO:0006046">
    <property type="term" value="P:N-acetylglucosamine catabolic process"/>
    <property type="evidence" value="ECO:0007669"/>
    <property type="project" value="TreeGrafter"/>
</dbReference>
<dbReference type="GO" id="GO:0019262">
    <property type="term" value="P:N-acetylneuraminate catabolic process"/>
    <property type="evidence" value="ECO:0007669"/>
    <property type="project" value="UniProtKB-UniRule"/>
</dbReference>
<dbReference type="CDD" id="cd01399">
    <property type="entry name" value="GlcN6P_deaminase"/>
    <property type="match status" value="1"/>
</dbReference>
<dbReference type="FunFam" id="3.40.50.1360:FF:000003">
    <property type="entry name" value="Glucosamine-6-phosphate deaminase"/>
    <property type="match status" value="1"/>
</dbReference>
<dbReference type="Gene3D" id="3.40.50.1360">
    <property type="match status" value="1"/>
</dbReference>
<dbReference type="HAMAP" id="MF_01241">
    <property type="entry name" value="GlcN6P_deamin"/>
    <property type="match status" value="1"/>
</dbReference>
<dbReference type="InterPro" id="IPR006148">
    <property type="entry name" value="Glc/Gal-6P_isomerase"/>
</dbReference>
<dbReference type="InterPro" id="IPR004547">
    <property type="entry name" value="Glucosamine6P_isomerase"/>
</dbReference>
<dbReference type="InterPro" id="IPR018321">
    <property type="entry name" value="Glucosamine6P_isomerase_CS"/>
</dbReference>
<dbReference type="InterPro" id="IPR037171">
    <property type="entry name" value="NagB/RpiA_transferase-like"/>
</dbReference>
<dbReference type="PANTHER" id="PTHR11280">
    <property type="entry name" value="GLUCOSAMINE-6-PHOSPHATE ISOMERASE"/>
    <property type="match status" value="1"/>
</dbReference>
<dbReference type="PANTHER" id="PTHR11280:SF5">
    <property type="entry name" value="GLUCOSAMINE-6-PHOSPHATE ISOMERASE"/>
    <property type="match status" value="1"/>
</dbReference>
<dbReference type="Pfam" id="PF01182">
    <property type="entry name" value="Glucosamine_iso"/>
    <property type="match status" value="1"/>
</dbReference>
<dbReference type="SUPFAM" id="SSF100950">
    <property type="entry name" value="NagB/RpiA/CoA transferase-like"/>
    <property type="match status" value="1"/>
</dbReference>
<dbReference type="PROSITE" id="PS01161">
    <property type="entry name" value="GLC_GALNAC_ISOMERASE"/>
    <property type="match status" value="1"/>
</dbReference>
<organism>
    <name type="scientific">Streptococcus pneumoniae serotype 2 (strain D39 / NCTC 7466)</name>
    <dbReference type="NCBI Taxonomy" id="373153"/>
    <lineage>
        <taxon>Bacteria</taxon>
        <taxon>Bacillati</taxon>
        <taxon>Bacillota</taxon>
        <taxon>Bacilli</taxon>
        <taxon>Lactobacillales</taxon>
        <taxon>Streptococcaceae</taxon>
        <taxon>Streptococcus</taxon>
    </lineage>
</organism>
<sequence length="235" mass="25729">MKVIKVENQVQGGKVAFEILKEKLANGAQTLGLATGSSPLEFYKEIVESNLDFSNLTSVNLDEYVGLDGDNPQSYRYFMQENLFNQKPFKESFLPRGVKDNAEAEVERYNQILADHPVDLQILGIGRNGHIGFNEPGTPFDSQTHLVELDQSTIEANARFFAKIEDVPTQAISMGIKNILDAKSIILFAYGESKAEAIAGTVSGPVTENLPASSLQNHPDVTIIADAEALSLLEK</sequence>
<evidence type="ECO:0000255" key="1">
    <source>
        <dbReference type="HAMAP-Rule" id="MF_01241"/>
    </source>
</evidence>
<feature type="chain" id="PRO_1000067027" description="Glucosamine-6-phosphate deaminase">
    <location>
        <begin position="1"/>
        <end position="235"/>
    </location>
</feature>
<feature type="active site" description="Proton acceptor; for enolization step" evidence="1">
    <location>
        <position position="62"/>
    </location>
</feature>
<feature type="active site" description="For ring-opening step" evidence="1">
    <location>
        <position position="128"/>
    </location>
</feature>
<feature type="active site" description="Proton acceptor; for ring-opening step" evidence="1">
    <location>
        <position position="130"/>
    </location>
</feature>
<feature type="active site" description="For ring-opening step" evidence="1">
    <location>
        <position position="135"/>
    </location>
</feature>
<proteinExistence type="inferred from homology"/>
<keyword id="KW-0119">Carbohydrate metabolism</keyword>
<keyword id="KW-0378">Hydrolase</keyword>
<keyword id="KW-1185">Reference proteome</keyword>
<reference key="1">
    <citation type="journal article" date="2007" name="J. Bacteriol.">
        <title>Genome sequence of Avery's virulent serotype 2 strain D39 of Streptococcus pneumoniae and comparison with that of unencapsulated laboratory strain R6.</title>
        <authorList>
            <person name="Lanie J.A."/>
            <person name="Ng W.-L."/>
            <person name="Kazmierczak K.M."/>
            <person name="Andrzejewski T.M."/>
            <person name="Davidsen T.M."/>
            <person name="Wayne K.J."/>
            <person name="Tettelin H."/>
            <person name="Glass J.I."/>
            <person name="Winkler M.E."/>
        </authorList>
    </citation>
    <scope>NUCLEOTIDE SEQUENCE [LARGE SCALE GENOMIC DNA]</scope>
    <source>
        <strain>D39 / NCTC 7466</strain>
    </source>
</reference>
<protein>
    <recommendedName>
        <fullName evidence="1">Glucosamine-6-phosphate deaminase</fullName>
        <ecNumber evidence="1">3.5.99.6</ecNumber>
    </recommendedName>
    <alternativeName>
        <fullName evidence="1">GlcN6P deaminase</fullName>
        <shortName evidence="1">GNPDA</shortName>
    </alternativeName>
    <alternativeName>
        <fullName evidence="1">Glucosamine-6-phosphate isomerase</fullName>
    </alternativeName>
</protein>